<evidence type="ECO:0000255" key="1">
    <source>
        <dbReference type="HAMAP-Rule" id="MF_01865"/>
    </source>
</evidence>
<evidence type="ECO:0000255" key="2">
    <source>
        <dbReference type="PROSITE-ProRule" id="PRU01266"/>
    </source>
</evidence>
<dbReference type="EC" id="2.8.4.4" evidence="1"/>
<dbReference type="EMBL" id="AE016827">
    <property type="protein sequence ID" value="AAU38854.1"/>
    <property type="molecule type" value="Genomic_DNA"/>
</dbReference>
<dbReference type="SMR" id="Q65QA6"/>
<dbReference type="STRING" id="221988.MS2247"/>
<dbReference type="KEGG" id="msu:MS2247"/>
<dbReference type="eggNOG" id="COG0621">
    <property type="taxonomic scope" value="Bacteria"/>
</dbReference>
<dbReference type="HOGENOM" id="CLU_018697_0_0_6"/>
<dbReference type="Proteomes" id="UP000000607">
    <property type="component" value="Chromosome"/>
</dbReference>
<dbReference type="GO" id="GO:0005829">
    <property type="term" value="C:cytosol"/>
    <property type="evidence" value="ECO:0007669"/>
    <property type="project" value="TreeGrafter"/>
</dbReference>
<dbReference type="GO" id="GO:0051539">
    <property type="term" value="F:4 iron, 4 sulfur cluster binding"/>
    <property type="evidence" value="ECO:0007669"/>
    <property type="project" value="UniProtKB-UniRule"/>
</dbReference>
<dbReference type="GO" id="GO:0035599">
    <property type="term" value="F:aspartic acid methylthiotransferase activity"/>
    <property type="evidence" value="ECO:0007669"/>
    <property type="project" value="TreeGrafter"/>
</dbReference>
<dbReference type="GO" id="GO:0046872">
    <property type="term" value="F:metal ion binding"/>
    <property type="evidence" value="ECO:0007669"/>
    <property type="project" value="UniProtKB-KW"/>
</dbReference>
<dbReference type="GO" id="GO:0103039">
    <property type="term" value="F:protein methylthiotransferase activity"/>
    <property type="evidence" value="ECO:0007669"/>
    <property type="project" value="UniProtKB-EC"/>
</dbReference>
<dbReference type="GO" id="GO:0006400">
    <property type="term" value="P:tRNA modification"/>
    <property type="evidence" value="ECO:0007669"/>
    <property type="project" value="InterPro"/>
</dbReference>
<dbReference type="CDD" id="cd01335">
    <property type="entry name" value="Radical_SAM"/>
    <property type="match status" value="1"/>
</dbReference>
<dbReference type="FunFam" id="2.40.50.140:FF:000060">
    <property type="entry name" value="Ribosomal protein S12 methylthiotransferase RimO"/>
    <property type="match status" value="1"/>
</dbReference>
<dbReference type="FunFam" id="3.40.50.12160:FF:000002">
    <property type="entry name" value="Ribosomal protein S12 methylthiotransferase RimO"/>
    <property type="match status" value="1"/>
</dbReference>
<dbReference type="FunFam" id="3.80.30.20:FF:000001">
    <property type="entry name" value="tRNA-2-methylthio-N(6)-dimethylallyladenosine synthase 2"/>
    <property type="match status" value="1"/>
</dbReference>
<dbReference type="Gene3D" id="3.40.50.12160">
    <property type="entry name" value="Methylthiotransferase, N-terminal domain"/>
    <property type="match status" value="1"/>
</dbReference>
<dbReference type="Gene3D" id="2.40.50.140">
    <property type="entry name" value="Nucleic acid-binding proteins"/>
    <property type="match status" value="1"/>
</dbReference>
<dbReference type="Gene3D" id="3.80.30.20">
    <property type="entry name" value="tm_1862 like domain"/>
    <property type="match status" value="1"/>
</dbReference>
<dbReference type="HAMAP" id="MF_01865">
    <property type="entry name" value="MTTase_RimO"/>
    <property type="match status" value="1"/>
</dbReference>
<dbReference type="InterPro" id="IPR006638">
    <property type="entry name" value="Elp3/MiaA/NifB-like_rSAM"/>
</dbReference>
<dbReference type="InterPro" id="IPR005839">
    <property type="entry name" value="Methylthiotransferase"/>
</dbReference>
<dbReference type="InterPro" id="IPR020612">
    <property type="entry name" value="Methylthiotransferase_CS"/>
</dbReference>
<dbReference type="InterPro" id="IPR013848">
    <property type="entry name" value="Methylthiotransferase_N"/>
</dbReference>
<dbReference type="InterPro" id="IPR038135">
    <property type="entry name" value="Methylthiotransferase_N_sf"/>
</dbReference>
<dbReference type="InterPro" id="IPR012340">
    <property type="entry name" value="NA-bd_OB-fold"/>
</dbReference>
<dbReference type="InterPro" id="IPR005840">
    <property type="entry name" value="Ribosomal_uS12_MeSTrfase_RimO"/>
</dbReference>
<dbReference type="InterPro" id="IPR007197">
    <property type="entry name" value="rSAM"/>
</dbReference>
<dbReference type="InterPro" id="IPR023404">
    <property type="entry name" value="rSAM_horseshoe"/>
</dbReference>
<dbReference type="InterPro" id="IPR002792">
    <property type="entry name" value="TRAM_dom"/>
</dbReference>
<dbReference type="NCBIfam" id="TIGR01125">
    <property type="entry name" value="30S ribosomal protein S12 methylthiotransferase RimO"/>
    <property type="match status" value="1"/>
</dbReference>
<dbReference type="NCBIfam" id="TIGR00089">
    <property type="entry name" value="MiaB/RimO family radical SAM methylthiotransferase"/>
    <property type="match status" value="1"/>
</dbReference>
<dbReference type="PANTHER" id="PTHR43837">
    <property type="entry name" value="RIBOSOMAL PROTEIN S12 METHYLTHIOTRANSFERASE RIMO"/>
    <property type="match status" value="1"/>
</dbReference>
<dbReference type="PANTHER" id="PTHR43837:SF1">
    <property type="entry name" value="RIBOSOMAL PROTEIN US12 METHYLTHIOTRANSFERASE RIMO"/>
    <property type="match status" value="1"/>
</dbReference>
<dbReference type="Pfam" id="PF04055">
    <property type="entry name" value="Radical_SAM"/>
    <property type="match status" value="1"/>
</dbReference>
<dbReference type="Pfam" id="PF18693">
    <property type="entry name" value="TRAM_2"/>
    <property type="match status" value="1"/>
</dbReference>
<dbReference type="Pfam" id="PF00919">
    <property type="entry name" value="UPF0004"/>
    <property type="match status" value="1"/>
</dbReference>
<dbReference type="SFLD" id="SFLDG01082">
    <property type="entry name" value="B12-binding_domain_containing"/>
    <property type="match status" value="1"/>
</dbReference>
<dbReference type="SFLD" id="SFLDG01061">
    <property type="entry name" value="methylthiotransferase"/>
    <property type="match status" value="1"/>
</dbReference>
<dbReference type="SFLD" id="SFLDF00274">
    <property type="entry name" value="ribosomal_protein_S12_methylth"/>
    <property type="match status" value="1"/>
</dbReference>
<dbReference type="SMART" id="SM00729">
    <property type="entry name" value="Elp3"/>
    <property type="match status" value="1"/>
</dbReference>
<dbReference type="SUPFAM" id="SSF102114">
    <property type="entry name" value="Radical SAM enzymes"/>
    <property type="match status" value="1"/>
</dbReference>
<dbReference type="PROSITE" id="PS51449">
    <property type="entry name" value="MTTASE_N"/>
    <property type="match status" value="1"/>
</dbReference>
<dbReference type="PROSITE" id="PS01278">
    <property type="entry name" value="MTTASE_RADICAL"/>
    <property type="match status" value="1"/>
</dbReference>
<dbReference type="PROSITE" id="PS51918">
    <property type="entry name" value="RADICAL_SAM"/>
    <property type="match status" value="1"/>
</dbReference>
<dbReference type="PROSITE" id="PS50926">
    <property type="entry name" value="TRAM"/>
    <property type="match status" value="1"/>
</dbReference>
<keyword id="KW-0004">4Fe-4S</keyword>
<keyword id="KW-0963">Cytoplasm</keyword>
<keyword id="KW-0408">Iron</keyword>
<keyword id="KW-0411">Iron-sulfur</keyword>
<keyword id="KW-0479">Metal-binding</keyword>
<keyword id="KW-0949">S-adenosyl-L-methionine</keyword>
<keyword id="KW-0808">Transferase</keyword>
<accession>Q65QA6</accession>
<reference key="1">
    <citation type="journal article" date="2004" name="Nat. Biotechnol.">
        <title>The genome sequence of the capnophilic rumen bacterium Mannheimia succiniciproducens.</title>
        <authorList>
            <person name="Hong S.H."/>
            <person name="Kim J.S."/>
            <person name="Lee S.Y."/>
            <person name="In Y.H."/>
            <person name="Choi S.S."/>
            <person name="Rih J.-K."/>
            <person name="Kim C.H."/>
            <person name="Jeong H."/>
            <person name="Hur C.G."/>
            <person name="Kim J.J."/>
        </authorList>
    </citation>
    <scope>NUCLEOTIDE SEQUENCE [LARGE SCALE GENOMIC DNA]</scope>
    <source>
        <strain>KCTC 0769BP / MBEL55E</strain>
    </source>
</reference>
<comment type="function">
    <text evidence="1">Catalyzes the methylthiolation of an aspartic acid residue of ribosomal protein uS12.</text>
</comment>
<comment type="catalytic activity">
    <reaction evidence="1">
        <text>L-aspartate(89)-[ribosomal protein uS12]-hydrogen + (sulfur carrier)-SH + AH2 + 2 S-adenosyl-L-methionine = 3-methylsulfanyl-L-aspartate(89)-[ribosomal protein uS12]-hydrogen + (sulfur carrier)-H + 5'-deoxyadenosine + L-methionine + A + S-adenosyl-L-homocysteine + 2 H(+)</text>
        <dbReference type="Rhea" id="RHEA:37087"/>
        <dbReference type="Rhea" id="RHEA-COMP:10460"/>
        <dbReference type="Rhea" id="RHEA-COMP:10461"/>
        <dbReference type="Rhea" id="RHEA-COMP:14737"/>
        <dbReference type="Rhea" id="RHEA-COMP:14739"/>
        <dbReference type="ChEBI" id="CHEBI:13193"/>
        <dbReference type="ChEBI" id="CHEBI:15378"/>
        <dbReference type="ChEBI" id="CHEBI:17319"/>
        <dbReference type="ChEBI" id="CHEBI:17499"/>
        <dbReference type="ChEBI" id="CHEBI:29917"/>
        <dbReference type="ChEBI" id="CHEBI:29961"/>
        <dbReference type="ChEBI" id="CHEBI:57844"/>
        <dbReference type="ChEBI" id="CHEBI:57856"/>
        <dbReference type="ChEBI" id="CHEBI:59789"/>
        <dbReference type="ChEBI" id="CHEBI:64428"/>
        <dbReference type="ChEBI" id="CHEBI:73599"/>
        <dbReference type="EC" id="2.8.4.4"/>
    </reaction>
</comment>
<comment type="cofactor">
    <cofactor evidence="1">
        <name>[4Fe-4S] cluster</name>
        <dbReference type="ChEBI" id="CHEBI:49883"/>
    </cofactor>
    <text evidence="1">Binds 2 [4Fe-4S] clusters. One cluster is coordinated with 3 cysteines and an exchangeable S-adenosyl-L-methionine.</text>
</comment>
<comment type="subcellular location">
    <subcellularLocation>
        <location evidence="1">Cytoplasm</location>
    </subcellularLocation>
</comment>
<comment type="similarity">
    <text evidence="1">Belongs to the methylthiotransferase family. RimO subfamily.</text>
</comment>
<proteinExistence type="inferred from homology"/>
<gene>
    <name evidence="1" type="primary">rimO</name>
    <name type="ordered locus">MS2247</name>
</gene>
<sequence length="448" mass="50326">MRYFMSYSAPNIGFVSLGCPKNLVDSERILTELRTDGYNIIPTYENADLVIVNTCGFIDSAVQESLEAIGEALEENGKVIVTGCLGAKENQIREVHPKVLEITGPHSYEAVMEHVHKYVPRPERNPYTSLVPAQGVKLTPKHYAYLKISEGCDHKCTFCIIPSLRGDLDSRPITQVLDEAKRLVDSGVKELLVVSQDTSAYALDQSKENQNKTVFWNGAPIKNNLITLCRQLGTLGAWIRLHYVYPYPHVDDLIPLMAEGKILPYLDIPLQHASPKVLKAMKRPGSVERVLERIQKWREICPELTLRSTFIVGFPGETEEDFQMLLDFLQEAQLDRVGCFKFSPVEGAVATDMADQVPEEVKEQRFQRFMELQQQISAQRLQQKIGKTLPVIIDDIDEDGIIGRSMADAPEIDGVVYVDNRSESAVKIGDIIQVAITNADEYDLWGTC</sequence>
<feature type="chain" id="PRO_0000374886" description="Ribosomal protein uS12 methylthiotransferase RimO">
    <location>
        <begin position="1"/>
        <end position="448"/>
    </location>
</feature>
<feature type="domain" description="MTTase N-terminal" evidence="1">
    <location>
        <begin position="10"/>
        <end position="120"/>
    </location>
</feature>
<feature type="domain" description="Radical SAM core" evidence="2">
    <location>
        <begin position="138"/>
        <end position="379"/>
    </location>
</feature>
<feature type="domain" description="TRAM" evidence="1">
    <location>
        <begin position="382"/>
        <end position="448"/>
    </location>
</feature>
<feature type="binding site" evidence="1">
    <location>
        <position position="19"/>
    </location>
    <ligand>
        <name>[4Fe-4S] cluster</name>
        <dbReference type="ChEBI" id="CHEBI:49883"/>
        <label>1</label>
    </ligand>
</feature>
<feature type="binding site" evidence="1">
    <location>
        <position position="55"/>
    </location>
    <ligand>
        <name>[4Fe-4S] cluster</name>
        <dbReference type="ChEBI" id="CHEBI:49883"/>
        <label>1</label>
    </ligand>
</feature>
<feature type="binding site" evidence="1">
    <location>
        <position position="84"/>
    </location>
    <ligand>
        <name>[4Fe-4S] cluster</name>
        <dbReference type="ChEBI" id="CHEBI:49883"/>
        <label>1</label>
    </ligand>
</feature>
<feature type="binding site" evidence="1">
    <location>
        <position position="152"/>
    </location>
    <ligand>
        <name>[4Fe-4S] cluster</name>
        <dbReference type="ChEBI" id="CHEBI:49883"/>
        <label>2</label>
        <note>4Fe-4S-S-AdoMet</note>
    </ligand>
</feature>
<feature type="binding site" evidence="1">
    <location>
        <position position="156"/>
    </location>
    <ligand>
        <name>[4Fe-4S] cluster</name>
        <dbReference type="ChEBI" id="CHEBI:49883"/>
        <label>2</label>
        <note>4Fe-4S-S-AdoMet</note>
    </ligand>
</feature>
<feature type="binding site" evidence="1">
    <location>
        <position position="159"/>
    </location>
    <ligand>
        <name>[4Fe-4S] cluster</name>
        <dbReference type="ChEBI" id="CHEBI:49883"/>
        <label>2</label>
        <note>4Fe-4S-S-AdoMet</note>
    </ligand>
</feature>
<protein>
    <recommendedName>
        <fullName evidence="1">Ribosomal protein uS12 methylthiotransferase RimO</fullName>
        <shortName evidence="1">uS12 MTTase</shortName>
        <shortName evidence="1">uS12 methylthiotransferase</shortName>
        <ecNumber evidence="1">2.8.4.4</ecNumber>
    </recommendedName>
    <alternativeName>
        <fullName evidence="1">Ribosomal protein uS12 (aspartate-C(3))-methylthiotransferase</fullName>
    </alternativeName>
    <alternativeName>
        <fullName evidence="1">Ribosome maturation factor RimO</fullName>
    </alternativeName>
</protein>
<organism>
    <name type="scientific">Mannheimia succiniciproducens (strain KCTC 0769BP / MBEL55E)</name>
    <dbReference type="NCBI Taxonomy" id="221988"/>
    <lineage>
        <taxon>Bacteria</taxon>
        <taxon>Pseudomonadati</taxon>
        <taxon>Pseudomonadota</taxon>
        <taxon>Gammaproteobacteria</taxon>
        <taxon>Pasteurellales</taxon>
        <taxon>Pasteurellaceae</taxon>
        <taxon>Basfia</taxon>
    </lineage>
</organism>
<name>RIMO_MANSM</name>